<reference key="1">
    <citation type="journal article" date="1992" name="Nucleic Acids Res.">
        <title>Systematic sequencing of the Escherichia coli genome: analysis of the 0-2.4 min region.</title>
        <authorList>
            <person name="Yura T."/>
            <person name="Mori H."/>
            <person name="Nagai H."/>
            <person name="Nagata T."/>
            <person name="Ishihama A."/>
            <person name="Fujita N."/>
            <person name="Isono K."/>
            <person name="Mizobuchi K."/>
            <person name="Nakata A."/>
        </authorList>
    </citation>
    <scope>NUCLEOTIDE SEQUENCE [LARGE SCALE GENOMIC DNA]</scope>
    <source>
        <strain>K12</strain>
    </source>
</reference>
<reference key="2">
    <citation type="journal article" date="1997" name="Science">
        <title>The complete genome sequence of Escherichia coli K-12.</title>
        <authorList>
            <person name="Blattner F.R."/>
            <person name="Plunkett G. III"/>
            <person name="Bloch C.A."/>
            <person name="Perna N.T."/>
            <person name="Burland V."/>
            <person name="Riley M."/>
            <person name="Collado-Vides J."/>
            <person name="Glasner J.D."/>
            <person name="Rode C.K."/>
            <person name="Mayhew G.F."/>
            <person name="Gregor J."/>
            <person name="Davis N.W."/>
            <person name="Kirkpatrick H.A."/>
            <person name="Goeden M.A."/>
            <person name="Rose D.J."/>
            <person name="Mau B."/>
            <person name="Shao Y."/>
        </authorList>
    </citation>
    <scope>NUCLEOTIDE SEQUENCE [LARGE SCALE GENOMIC DNA]</scope>
    <source>
        <strain>K12 / MG1655 / ATCC 47076</strain>
    </source>
</reference>
<reference key="3">
    <citation type="journal article" date="2006" name="Mol. Syst. Biol.">
        <title>Highly accurate genome sequences of Escherichia coli K-12 strains MG1655 and W3110.</title>
        <authorList>
            <person name="Hayashi K."/>
            <person name="Morooka N."/>
            <person name="Yamamoto Y."/>
            <person name="Fujita K."/>
            <person name="Isono K."/>
            <person name="Choi S."/>
            <person name="Ohtsubo E."/>
            <person name="Baba T."/>
            <person name="Wanner B.L."/>
            <person name="Mori H."/>
            <person name="Horiuchi T."/>
        </authorList>
    </citation>
    <scope>NUCLEOTIDE SEQUENCE [LARGE SCALE GENOMIC DNA]</scope>
    <scope>SEQUENCE REVISION TO 79 AND 123</scope>
    <source>
        <strain>K12 / W3110 / ATCC 27325 / DSM 5911</strain>
    </source>
</reference>
<reference key="4">
    <citation type="journal article" date="2000" name="J. Bacteriol.">
        <title>Identification of an ancillary protein, YabF, required for activity of the KefC glutathione-gated potassium efflux system in Escherichia coli.</title>
        <authorList>
            <person name="Miller S."/>
            <person name="Ness L.S."/>
            <person name="Wood C.M."/>
            <person name="Fox B.C."/>
            <person name="Booth I.R."/>
        </authorList>
    </citation>
    <scope>FUNCTION</scope>
    <source>
        <strain>Frag5</strain>
    </source>
</reference>
<reference key="5">
    <citation type="journal article" date="2007" name="Proc. Natl. Acad. Sci. U.S.A.">
        <title>Three two-component transporters with channel-like properties have monovalent cation/proton antiport activity.</title>
        <authorList>
            <person name="Fujisawa M."/>
            <person name="Ito M."/>
            <person name="Krulwich T.A."/>
        </authorList>
    </citation>
    <scope>SUBUNIT</scope>
</reference>
<reference key="6">
    <citation type="journal article" date="2011" name="J. Bacteriol.">
        <title>KefF, the regulatory subunit of the potassium efflux system KefC, shows quinone oxidoreductase activity.</title>
        <authorList>
            <person name="Lyngberg L."/>
            <person name="Healy J."/>
            <person name="Bartlett W."/>
            <person name="Miller S."/>
            <person name="Conway S.J."/>
            <person name="Booth I.R."/>
            <person name="Rasmussen T."/>
        </authorList>
    </citation>
    <scope>FUNCTION AS AN OXIDOREDUCTASE</scope>
    <scope>CATALYTIC ACTIVITY</scope>
    <scope>COFACTOR</scope>
    <scope>SUBUNIT</scope>
    <scope>MUTAGENESIS OF GLY-107; HIS-112 AND PHE-149</scope>
</reference>
<reference key="7">
    <citation type="journal article" date="2009" name="Structure">
        <title>KTN (RCK) domains regulate K+ channels and transporters by controlling the dimer-hinge conformation.</title>
        <authorList>
            <person name="Roosild T.P."/>
            <person name="Castronovo S."/>
            <person name="Miller S."/>
            <person name="Li C."/>
            <person name="Rasmussen T."/>
            <person name="Bartlett W."/>
            <person name="Gunasekera B."/>
            <person name="Choe S."/>
            <person name="Booth I.R."/>
        </authorList>
    </citation>
    <scope>X-RAY CRYSTALLOGRAPHY (2.40 ANGSTROMS) IN COMPLEX WITH KEFC AND FMN</scope>
    <scope>FUNCTION</scope>
    <scope>SUBUNIT</scope>
    <scope>INTERACTION WITH KEFC</scope>
    <scope>MUTAGENESIS OF ASP-41</scope>
    <scope>IDENTIFICATION BY MASS SPECTROMETRY</scope>
</reference>
<reference key="8">
    <citation type="journal article" date="2010" name="Proc. Natl. Acad. Sci. U.S.A.">
        <title>Mechanism of ligand-gated potassium efflux in bacterial pathogens.</title>
        <authorList>
            <person name="Roosild T.P."/>
            <person name="Castronovo S."/>
            <person name="Healy J."/>
            <person name="Miller S."/>
            <person name="Pliotas C."/>
            <person name="Rasmussen T."/>
            <person name="Bartlett W."/>
            <person name="Conway S.J."/>
            <person name="Booth I.R."/>
        </authorList>
    </citation>
    <scope>X-RAY CRYSTALLOGRAPHY (1.75 ANGSTROMS) IN COMPLEX WITH KEFC AND FMN</scope>
    <scope>SUBUNIT</scope>
    <scope>FMN-BINDING</scope>
    <scope>INTERACTION WITH KEFC</scope>
</reference>
<organism>
    <name type="scientific">Escherichia coli (strain K12)</name>
    <dbReference type="NCBI Taxonomy" id="83333"/>
    <lineage>
        <taxon>Bacteria</taxon>
        <taxon>Pseudomonadati</taxon>
        <taxon>Pseudomonadota</taxon>
        <taxon>Gammaproteobacteria</taxon>
        <taxon>Enterobacterales</taxon>
        <taxon>Enterobacteriaceae</taxon>
        <taxon>Escherichia</taxon>
    </lineage>
</organism>
<evidence type="ECO:0000255" key="1">
    <source>
        <dbReference type="HAMAP-Rule" id="MF_01414"/>
    </source>
</evidence>
<evidence type="ECO:0000269" key="2">
    <source>
    </source>
</evidence>
<evidence type="ECO:0000269" key="3">
    <source>
    </source>
</evidence>
<evidence type="ECO:0000269" key="4">
    <source>
    </source>
</evidence>
<evidence type="ECO:0000269" key="5">
    <source>
    </source>
</evidence>
<evidence type="ECO:0000269" key="6">
    <source>
    </source>
</evidence>
<evidence type="ECO:0007829" key="7">
    <source>
        <dbReference type="PDB" id="3EYW"/>
    </source>
</evidence>
<evidence type="ECO:0007829" key="8">
    <source>
        <dbReference type="PDB" id="3L9W"/>
    </source>
</evidence>
<evidence type="ECO:0007829" key="9">
    <source>
        <dbReference type="PDB" id="3L9X"/>
    </source>
</evidence>
<proteinExistence type="evidence at protein level"/>
<protein>
    <recommendedName>
        <fullName evidence="1">Glutathione-regulated potassium-efflux system ancillary protein KefF</fullName>
    </recommendedName>
    <alternativeName>
        <fullName evidence="1">Quinone oxidoreductase KefF</fullName>
        <ecNumber evidence="1">1.6.5.2</ecNumber>
    </alternativeName>
</protein>
<gene>
    <name evidence="1" type="primary">kefF</name>
    <name type="synonym">yabF</name>
    <name type="ordered locus">b0046</name>
    <name type="ordered locus">JW0045</name>
</gene>
<keyword id="KW-0002">3D-structure</keyword>
<keyword id="KW-0997">Cell inner membrane</keyword>
<keyword id="KW-1003">Cell membrane</keyword>
<keyword id="KW-0285">Flavoprotein</keyword>
<keyword id="KW-0288">FMN</keyword>
<keyword id="KW-0472">Membrane</keyword>
<keyword id="KW-0520">NAD</keyword>
<keyword id="KW-0560">Oxidoreductase</keyword>
<keyword id="KW-1185">Reference proteome</keyword>
<dbReference type="EC" id="1.6.5.2" evidence="1"/>
<dbReference type="EMBL" id="U00096">
    <property type="protein sequence ID" value="AAC73157.1"/>
    <property type="molecule type" value="Genomic_DNA"/>
</dbReference>
<dbReference type="EMBL" id="AP009048">
    <property type="protein sequence ID" value="BAB96614.2"/>
    <property type="molecule type" value="Genomic_DNA"/>
</dbReference>
<dbReference type="PIR" id="F64725">
    <property type="entry name" value="F64725"/>
</dbReference>
<dbReference type="RefSeq" id="NP_414588.1">
    <property type="nucleotide sequence ID" value="NC_000913.3"/>
</dbReference>
<dbReference type="RefSeq" id="WP_000600725.1">
    <property type="nucleotide sequence ID" value="NZ_STEB01000010.1"/>
</dbReference>
<dbReference type="PDB" id="3EYW">
    <property type="method" value="X-ray"/>
    <property type="resolution" value="2.40 A"/>
    <property type="chains" value="A/B=1-176"/>
</dbReference>
<dbReference type="PDB" id="3L9W">
    <property type="method" value="X-ray"/>
    <property type="resolution" value="1.75 A"/>
    <property type="chains" value="A/B=1-176"/>
</dbReference>
<dbReference type="PDB" id="3L9X">
    <property type="method" value="X-ray"/>
    <property type="resolution" value="2.10 A"/>
    <property type="chains" value="A/B=1-176"/>
</dbReference>
<dbReference type="PDBsum" id="3EYW"/>
<dbReference type="PDBsum" id="3L9W"/>
<dbReference type="PDBsum" id="3L9X"/>
<dbReference type="SMR" id="P0A754"/>
<dbReference type="BioGRID" id="4262201">
    <property type="interactions" value="13"/>
</dbReference>
<dbReference type="BioGRID" id="849169">
    <property type="interactions" value="1"/>
</dbReference>
<dbReference type="ComplexPortal" id="CPX-2543">
    <property type="entry name" value="Glutathione-regulated potassium-efflux system KefC-KefF complex"/>
</dbReference>
<dbReference type="DIP" id="DIP-35822N"/>
<dbReference type="FunCoup" id="P0A754">
    <property type="interactions" value="45"/>
</dbReference>
<dbReference type="IntAct" id="P0A754">
    <property type="interactions" value="8"/>
</dbReference>
<dbReference type="STRING" id="511145.b0046"/>
<dbReference type="TCDB" id="2.A.37.1.1">
    <property type="family name" value="the monovalent cation:proton antiporter-2 (cpa2) family"/>
</dbReference>
<dbReference type="PaxDb" id="511145-b0046"/>
<dbReference type="EnsemblBacteria" id="AAC73157">
    <property type="protein sequence ID" value="AAC73157"/>
    <property type="gene ID" value="b0046"/>
</dbReference>
<dbReference type="GeneID" id="89519427"/>
<dbReference type="GeneID" id="944767"/>
<dbReference type="KEGG" id="ecj:JW0045"/>
<dbReference type="KEGG" id="eco:b0046"/>
<dbReference type="KEGG" id="ecoc:C3026_00240"/>
<dbReference type="PATRIC" id="fig|1411691.4.peg.2237"/>
<dbReference type="EchoBASE" id="EB1528"/>
<dbReference type="eggNOG" id="COG2249">
    <property type="taxonomic scope" value="Bacteria"/>
</dbReference>
<dbReference type="HOGENOM" id="CLU_058643_0_2_6"/>
<dbReference type="InParanoid" id="P0A754"/>
<dbReference type="OMA" id="IWQHPMQ"/>
<dbReference type="OrthoDB" id="9798454at2"/>
<dbReference type="PhylomeDB" id="P0A754"/>
<dbReference type="BioCyc" id="EcoCyc:EG11568-MONOMER"/>
<dbReference type="BioCyc" id="MetaCyc:EG11568-MONOMER"/>
<dbReference type="EvolutionaryTrace" id="P0A754"/>
<dbReference type="PRO" id="PR:P0A754"/>
<dbReference type="Proteomes" id="UP000000625">
    <property type="component" value="Chromosome"/>
</dbReference>
<dbReference type="GO" id="GO:0005886">
    <property type="term" value="C:plasma membrane"/>
    <property type="evidence" value="ECO:0007669"/>
    <property type="project" value="UniProtKB-SubCell"/>
</dbReference>
<dbReference type="GO" id="GO:1903103">
    <property type="term" value="C:potassium:proton antiporter complex"/>
    <property type="evidence" value="ECO:0000353"/>
    <property type="project" value="ComplexPortal"/>
</dbReference>
<dbReference type="GO" id="GO:0009055">
    <property type="term" value="F:electron transfer activity"/>
    <property type="evidence" value="ECO:0000315"/>
    <property type="project" value="EcoliWiki"/>
</dbReference>
<dbReference type="GO" id="GO:0010181">
    <property type="term" value="F:FMN binding"/>
    <property type="evidence" value="ECO:0000314"/>
    <property type="project" value="EcoCyc"/>
</dbReference>
<dbReference type="GO" id="GO:0003955">
    <property type="term" value="F:NAD(P)H dehydrogenase (quinone) activity"/>
    <property type="evidence" value="ECO:0000314"/>
    <property type="project" value="EcoCyc"/>
</dbReference>
<dbReference type="GO" id="GO:0050136">
    <property type="term" value="F:NADH:ubiquinone reductase (non-electrogenic) activity"/>
    <property type="evidence" value="ECO:0007669"/>
    <property type="project" value="RHEA"/>
</dbReference>
<dbReference type="GO" id="GO:0008753">
    <property type="term" value="F:NADPH dehydrogenase (quinone) activity"/>
    <property type="evidence" value="ECO:0007669"/>
    <property type="project" value="RHEA"/>
</dbReference>
<dbReference type="GO" id="GO:0042803">
    <property type="term" value="F:protein homodimerization activity"/>
    <property type="evidence" value="ECO:0000314"/>
    <property type="project" value="EcoCyc"/>
</dbReference>
<dbReference type="GO" id="GO:0051454">
    <property type="term" value="P:intracellular pH elevation"/>
    <property type="evidence" value="ECO:0000303"/>
    <property type="project" value="ComplexPortal"/>
</dbReference>
<dbReference type="GO" id="GO:1901381">
    <property type="term" value="P:positive regulation of potassium ion transmembrane transport"/>
    <property type="evidence" value="ECO:0000315"/>
    <property type="project" value="EcoCyc"/>
</dbReference>
<dbReference type="GO" id="GO:0006813">
    <property type="term" value="P:potassium ion transport"/>
    <property type="evidence" value="ECO:0007669"/>
    <property type="project" value="InterPro"/>
</dbReference>
<dbReference type="GO" id="GO:0051453">
    <property type="term" value="P:regulation of intracellular pH"/>
    <property type="evidence" value="ECO:0000303"/>
    <property type="project" value="ComplexPortal"/>
</dbReference>
<dbReference type="FunFam" id="3.40.50.360:FF:000008">
    <property type="entry name" value="Glutathione-regulated potassium-efflux system ancillary protein KefF"/>
    <property type="match status" value="1"/>
</dbReference>
<dbReference type="Gene3D" id="3.40.50.360">
    <property type="match status" value="1"/>
</dbReference>
<dbReference type="HAMAP" id="MF_01414">
    <property type="entry name" value="K_H_efflux_KefF"/>
    <property type="match status" value="1"/>
</dbReference>
<dbReference type="InterPro" id="IPR003680">
    <property type="entry name" value="Flavodoxin_fold"/>
</dbReference>
<dbReference type="InterPro" id="IPR029039">
    <property type="entry name" value="Flavoprotein-like_sf"/>
</dbReference>
<dbReference type="InterPro" id="IPR023948">
    <property type="entry name" value="K_H_efflux_KefF"/>
</dbReference>
<dbReference type="InterPro" id="IPR046980">
    <property type="entry name" value="KefG/KefF"/>
</dbReference>
<dbReference type="NCBIfam" id="NF002044">
    <property type="entry name" value="PRK00871.1"/>
    <property type="match status" value="1"/>
</dbReference>
<dbReference type="PANTHER" id="PTHR47307:SF2">
    <property type="entry name" value="GLUTATHIONE-REGULATED POTASSIUM-EFFLUX SYSTEM ANCILLARY PROTEIN KEFF"/>
    <property type="match status" value="1"/>
</dbReference>
<dbReference type="PANTHER" id="PTHR47307">
    <property type="entry name" value="GLUTATHIONE-REGULATED POTASSIUM-EFFLUX SYSTEM ANCILLARY PROTEIN KEFG"/>
    <property type="match status" value="1"/>
</dbReference>
<dbReference type="Pfam" id="PF02525">
    <property type="entry name" value="Flavodoxin_2"/>
    <property type="match status" value="1"/>
</dbReference>
<dbReference type="SUPFAM" id="SSF52218">
    <property type="entry name" value="Flavoproteins"/>
    <property type="match status" value="1"/>
</dbReference>
<comment type="function">
    <text evidence="1 2 4 6">Regulatory subunit of a potassium efflux system that confers protection against electrophiles. Required for full activity of KefC. Shows redox enzymatic activity, but this enzymatic activity is not required for activation of KefC. Can use a wide range of substrates, including electrophilic quinones, and its function could be to reduce the redox toxicity of electrophilic quinones in parallel with acting as triggers for the KefC efflux system.</text>
</comment>
<comment type="catalytic activity">
    <reaction evidence="1 6">
        <text>a quinone + NADH + H(+) = a quinol + NAD(+)</text>
        <dbReference type="Rhea" id="RHEA:46160"/>
        <dbReference type="ChEBI" id="CHEBI:15378"/>
        <dbReference type="ChEBI" id="CHEBI:24646"/>
        <dbReference type="ChEBI" id="CHEBI:57540"/>
        <dbReference type="ChEBI" id="CHEBI:57945"/>
        <dbReference type="ChEBI" id="CHEBI:132124"/>
        <dbReference type="EC" id="1.6.5.2"/>
    </reaction>
</comment>
<comment type="catalytic activity">
    <reaction evidence="1 6">
        <text>a quinone + NADPH + H(+) = a quinol + NADP(+)</text>
        <dbReference type="Rhea" id="RHEA:46164"/>
        <dbReference type="ChEBI" id="CHEBI:15378"/>
        <dbReference type="ChEBI" id="CHEBI:24646"/>
        <dbReference type="ChEBI" id="CHEBI:57783"/>
        <dbReference type="ChEBI" id="CHEBI:58349"/>
        <dbReference type="ChEBI" id="CHEBI:132124"/>
        <dbReference type="EC" id="1.6.5.2"/>
    </reaction>
</comment>
<comment type="cofactor">
    <cofactor evidence="1 6">
        <name>FMN</name>
        <dbReference type="ChEBI" id="CHEBI:58210"/>
    </cofactor>
</comment>
<comment type="subunit">
    <text evidence="1 3 4 5 6">Homodimer. Interacts with KefC, forming a heterotetramer with 2:2 stoichiometry.</text>
</comment>
<comment type="interaction">
    <interactant intactId="EBI-562116">
        <id>P0A754</id>
    </interactant>
    <interactant intactId="EBI-547193">
        <id>P03819</id>
        <label>kefC</label>
    </interactant>
    <organismsDiffer>false</organismsDiffer>
    <experiments>2</experiments>
</comment>
<comment type="subcellular location">
    <subcellularLocation>
        <location evidence="1">Cell inner membrane</location>
        <topology evidence="1">Peripheral membrane protein</topology>
        <orientation evidence="1">Cytoplasmic side</orientation>
    </subcellularLocation>
</comment>
<comment type="similarity">
    <text evidence="1">Belongs to the NAD(P)H dehydrogenase (quinone) family. KefF subfamily.</text>
</comment>
<accession>P0A754</accession>
<accession>P31577</accession>
<accession>P75629</accession>
<name>KEFF_ECOLI</name>
<sequence>MILIIYAHPYPHHSHANKRMLEQARTLEGVEIRSLYQLYPDFNIDIAAEQEALSRADLIVWQHPMQWYSIPPLLKLWIDKVFSHGWAYGHGGTALHGKHLLWAVTTGGGESHFEIGAHPGFDVLSQPLQATAIYCGLNWLPPFAMHCTFICDDETLEGQARHYKQRLLEWQEAHHG</sequence>
<feature type="chain" id="PRO_0000071635" description="Glutathione-regulated potassium-efflux system ancillary protein KefF">
    <location>
        <begin position="1"/>
        <end position="176"/>
    </location>
</feature>
<feature type="binding site" evidence="1 4 5">
    <location>
        <position position="8"/>
    </location>
    <ligand>
        <name>FMN</name>
        <dbReference type="ChEBI" id="CHEBI:58210"/>
    </ligand>
</feature>
<feature type="binding site" evidence="1 4 5">
    <location>
        <begin position="14"/>
        <end position="17"/>
    </location>
    <ligand>
        <name>FMN</name>
        <dbReference type="ChEBI" id="CHEBI:58210"/>
    </ligand>
</feature>
<feature type="binding site" evidence="1 4 5">
    <location>
        <begin position="65"/>
        <end position="68"/>
    </location>
    <ligand>
        <name>FMN</name>
        <dbReference type="ChEBI" id="CHEBI:58210"/>
    </ligand>
</feature>
<feature type="binding site" evidence="1 4 5">
    <location>
        <begin position="105"/>
        <end position="108"/>
    </location>
    <ligand>
        <name>FMN</name>
        <dbReference type="ChEBI" id="CHEBI:58210"/>
    </ligand>
</feature>
<feature type="mutagenesis site" description="Strongly reduced potassium efflux." evidence="4">
    <original>D</original>
    <variation>K</variation>
    <location>
        <position position="41"/>
    </location>
</feature>
<feature type="mutagenesis site" description="Does not bind FMN. Lacks oxidoreductase activity, but is still able to activate potassium efflux." evidence="6">
    <original>G</original>
    <variation>S</variation>
    <location>
        <position position="107"/>
    </location>
</feature>
<feature type="mutagenesis site" description="Lacks oxidoreductase activity, but is still able to activate potassium efflux." evidence="6">
    <original>H</original>
    <variation>W</variation>
    <location>
        <position position="112"/>
    </location>
</feature>
<feature type="mutagenesis site" description="Lacks oxidoreductase activity, but is still able to activate potassium efflux." evidence="6">
    <original>F</original>
    <variation>W</variation>
    <location>
        <position position="149"/>
    </location>
</feature>
<feature type="strand" evidence="8">
    <location>
        <begin position="2"/>
        <end position="6"/>
    </location>
</feature>
<feature type="helix" evidence="8">
    <location>
        <begin position="11"/>
        <end position="13"/>
    </location>
</feature>
<feature type="helix" evidence="8">
    <location>
        <begin position="16"/>
        <end position="25"/>
    </location>
</feature>
<feature type="strand" evidence="8">
    <location>
        <begin position="27"/>
        <end position="34"/>
    </location>
</feature>
<feature type="helix" evidence="8">
    <location>
        <begin position="35"/>
        <end position="38"/>
    </location>
</feature>
<feature type="helix" evidence="8">
    <location>
        <begin position="46"/>
        <end position="54"/>
    </location>
</feature>
<feature type="strand" evidence="8">
    <location>
        <begin position="57"/>
        <end position="64"/>
    </location>
</feature>
<feature type="strand" evidence="7">
    <location>
        <begin position="67"/>
        <end position="69"/>
    </location>
</feature>
<feature type="helix" evidence="8">
    <location>
        <begin position="72"/>
        <end position="81"/>
    </location>
</feature>
<feature type="turn" evidence="8">
    <location>
        <begin position="84"/>
        <end position="86"/>
    </location>
</feature>
<feature type="strand" evidence="8">
    <location>
        <begin position="87"/>
        <end position="89"/>
    </location>
</feature>
<feature type="turn" evidence="8">
    <location>
        <begin position="94"/>
        <end position="97"/>
    </location>
</feature>
<feature type="strand" evidence="8">
    <location>
        <begin position="99"/>
        <end position="105"/>
    </location>
</feature>
<feature type="helix" evidence="8">
    <location>
        <begin position="110"/>
        <end position="113"/>
    </location>
</feature>
<feature type="strand" evidence="8">
    <location>
        <begin position="116"/>
        <end position="118"/>
    </location>
</feature>
<feature type="helix" evidence="8">
    <location>
        <begin position="121"/>
        <end position="125"/>
    </location>
</feature>
<feature type="helix" evidence="8">
    <location>
        <begin position="126"/>
        <end position="134"/>
    </location>
</feature>
<feature type="strand" evidence="8">
    <location>
        <begin position="143"/>
        <end position="145"/>
    </location>
</feature>
<feature type="helix" evidence="9">
    <location>
        <begin position="148"/>
        <end position="150"/>
    </location>
</feature>
<feature type="helix" evidence="8">
    <location>
        <begin position="153"/>
        <end position="172"/>
    </location>
</feature>